<proteinExistence type="inferred from homology"/>
<sequence length="231" mass="26923">MKFKFLLTPLLSSVLFLSACSATFEADLKNLIKETDGKDLDVSKLIITSEGKQILIGYLKKSYEVNSEKTTELLLNAWKQSAEKNEIGIDLFNWTKSIFSGVNTFNKKQKVEYFNMTYKGISDVSVKAKLNHTLTWNENYSYRGFNIHKGDKHYFNSFLTLKANSYLPFTSKNFDVYSKRIRLSVSFHWILKGKDELSQKILDKTVLNGYIEYIVDNYQINLFRYLVYLIE</sequence>
<dbReference type="EMBL" id="U00089">
    <property type="protein sequence ID" value="AAB95791.1"/>
    <property type="molecule type" value="Genomic_DNA"/>
</dbReference>
<dbReference type="PIR" id="S73469">
    <property type="entry name" value="S73469"/>
</dbReference>
<dbReference type="RefSeq" id="NP_109699.1">
    <property type="nucleotide sequence ID" value="NC_000912.1"/>
</dbReference>
<dbReference type="RefSeq" id="WP_010874368.1">
    <property type="nucleotide sequence ID" value="NZ_OU342337.1"/>
</dbReference>
<dbReference type="IntAct" id="P75102">
    <property type="interactions" value="1"/>
</dbReference>
<dbReference type="STRING" id="272634.MPN_011"/>
<dbReference type="EnsemblBacteria" id="AAB95791">
    <property type="protein sequence ID" value="AAB95791"/>
    <property type="gene ID" value="MPN_011"/>
</dbReference>
<dbReference type="KEGG" id="mpn:MPN_011"/>
<dbReference type="HOGENOM" id="CLU_1198717_0_0_14"/>
<dbReference type="BioCyc" id="MPNE272634:G1GJ3-14-MONOMER"/>
<dbReference type="Proteomes" id="UP000000808">
    <property type="component" value="Chromosome"/>
</dbReference>
<dbReference type="GO" id="GO:0005886">
    <property type="term" value="C:plasma membrane"/>
    <property type="evidence" value="ECO:0007669"/>
    <property type="project" value="UniProtKB-SubCell"/>
</dbReference>
<dbReference type="InterPro" id="IPR001595">
    <property type="entry name" value="Lipoprotein_3"/>
</dbReference>
<dbReference type="Pfam" id="PF00938">
    <property type="entry name" value="Lipoprotein_3"/>
    <property type="match status" value="1"/>
</dbReference>
<dbReference type="PROSITE" id="PS51257">
    <property type="entry name" value="PROKAR_LIPOPROTEIN"/>
    <property type="match status" value="1"/>
</dbReference>
<evidence type="ECO:0000255" key="1">
    <source>
        <dbReference type="PROSITE-ProRule" id="PRU00303"/>
    </source>
</evidence>
<evidence type="ECO:0000305" key="2"/>
<organism>
    <name type="scientific">Mycoplasma pneumoniae (strain ATCC 29342 / M129 / Subtype 1)</name>
    <name type="common">Mycoplasmoides pneumoniae</name>
    <dbReference type="NCBI Taxonomy" id="272634"/>
    <lineage>
        <taxon>Bacteria</taxon>
        <taxon>Bacillati</taxon>
        <taxon>Mycoplasmatota</taxon>
        <taxon>Mycoplasmoidales</taxon>
        <taxon>Mycoplasmoidaceae</taxon>
        <taxon>Mycoplasmoides</taxon>
    </lineage>
</organism>
<accession>P75102</accession>
<reference key="1">
    <citation type="journal article" date="1996" name="Nucleic Acids Res.">
        <title>Complete sequence analysis of the genome of the bacterium Mycoplasma pneumoniae.</title>
        <authorList>
            <person name="Himmelreich R."/>
            <person name="Hilbert H."/>
            <person name="Plagens H."/>
            <person name="Pirkl E."/>
            <person name="Li B.-C."/>
            <person name="Herrmann R."/>
        </authorList>
    </citation>
    <scope>NUCLEOTIDE SEQUENCE [LARGE SCALE GENOMIC DNA]</scope>
    <source>
        <strain>ATCC 29342 / M129 / Subtype 1</strain>
    </source>
</reference>
<keyword id="KW-1003">Cell membrane</keyword>
<keyword id="KW-0449">Lipoprotein</keyword>
<keyword id="KW-0472">Membrane</keyword>
<keyword id="KW-0564">Palmitate</keyword>
<keyword id="KW-1185">Reference proteome</keyword>
<keyword id="KW-0732">Signal</keyword>
<feature type="signal peptide" evidence="1">
    <location>
        <begin position="1"/>
        <end position="19"/>
    </location>
</feature>
<feature type="chain" id="PRO_0000014053" description="Uncharacterized lipoprotein MPN_011">
    <location>
        <begin position="20"/>
        <end position="231"/>
    </location>
</feature>
<feature type="lipid moiety-binding region" description="N-palmitoyl cysteine" evidence="1">
    <location>
        <position position="20"/>
    </location>
</feature>
<feature type="lipid moiety-binding region" description="S-diacylglycerol cysteine" evidence="1">
    <location>
        <position position="20"/>
    </location>
</feature>
<comment type="subcellular location">
    <subcellularLocation>
        <location evidence="1">Cell membrane</location>
        <topology evidence="1">Lipid-anchor</topology>
    </subcellularLocation>
</comment>
<comment type="similarity">
    <text evidence="2">Belongs to the MG439/MG440 family.</text>
</comment>
<protein>
    <recommendedName>
        <fullName>Uncharacterized lipoprotein MPN_011</fullName>
    </recommendedName>
</protein>
<name>Y011_MYCPN</name>
<gene>
    <name type="ordered locus">MPN_011</name>
    <name type="ORF">D12_orf231</name>
    <name type="ORF">MP143</name>
</gene>